<proteinExistence type="inferred from homology"/>
<reference key="1">
    <citation type="journal article" date="2001" name="Nature">
        <title>Complete genome sequence of Salmonella enterica serovar Typhimurium LT2.</title>
        <authorList>
            <person name="McClelland M."/>
            <person name="Sanderson K.E."/>
            <person name="Spieth J."/>
            <person name="Clifton S.W."/>
            <person name="Latreille P."/>
            <person name="Courtney L."/>
            <person name="Porwollik S."/>
            <person name="Ali J."/>
            <person name="Dante M."/>
            <person name="Du F."/>
            <person name="Hou S."/>
            <person name="Layman D."/>
            <person name="Leonard S."/>
            <person name="Nguyen C."/>
            <person name="Scott K."/>
            <person name="Holmes A."/>
            <person name="Grewal N."/>
            <person name="Mulvaney E."/>
            <person name="Ryan E."/>
            <person name="Sun H."/>
            <person name="Florea L."/>
            <person name="Miller W."/>
            <person name="Stoneking T."/>
            <person name="Nhan M."/>
            <person name="Waterston R."/>
            <person name="Wilson R.K."/>
        </authorList>
    </citation>
    <scope>NUCLEOTIDE SEQUENCE [LARGE SCALE GENOMIC DNA]</scope>
    <source>
        <strain>LT2 / SGSC1412 / ATCC 700720</strain>
    </source>
</reference>
<dbReference type="EC" id="1.7.2.3"/>
<dbReference type="EMBL" id="AE006468">
    <property type="protein sequence ID" value="AAL22681.1"/>
    <property type="molecule type" value="Genomic_DNA"/>
</dbReference>
<dbReference type="RefSeq" id="NP_462722.1">
    <property type="nucleotide sequence ID" value="NC_003197.2"/>
</dbReference>
<dbReference type="RefSeq" id="WP_000790665.1">
    <property type="nucleotide sequence ID" value="NC_003197.2"/>
</dbReference>
<dbReference type="SMR" id="Q8ZKZ7"/>
<dbReference type="STRING" id="99287.STM3822"/>
<dbReference type="PaxDb" id="99287-STM3822"/>
<dbReference type="GeneID" id="1255349"/>
<dbReference type="KEGG" id="stm:STM3822"/>
<dbReference type="PATRIC" id="fig|99287.12.peg.4046"/>
<dbReference type="HOGENOM" id="CLU_000422_13_3_6"/>
<dbReference type="OMA" id="DINWNGK"/>
<dbReference type="PhylomeDB" id="Q8ZKZ7"/>
<dbReference type="BioCyc" id="SENT99287:STM3822-MONOMER"/>
<dbReference type="Proteomes" id="UP000001014">
    <property type="component" value="Chromosome"/>
</dbReference>
<dbReference type="GO" id="GO:0030288">
    <property type="term" value="C:outer membrane-bounded periplasmic space"/>
    <property type="evidence" value="ECO:0000318"/>
    <property type="project" value="GO_Central"/>
</dbReference>
<dbReference type="GO" id="GO:0009055">
    <property type="term" value="F:electron transfer activity"/>
    <property type="evidence" value="ECO:0000318"/>
    <property type="project" value="GO_Central"/>
</dbReference>
<dbReference type="GO" id="GO:0030151">
    <property type="term" value="F:molybdenum ion binding"/>
    <property type="evidence" value="ECO:0000318"/>
    <property type="project" value="GO_Central"/>
</dbReference>
<dbReference type="GO" id="GO:0043546">
    <property type="term" value="F:molybdopterin cofactor binding"/>
    <property type="evidence" value="ECO:0007669"/>
    <property type="project" value="InterPro"/>
</dbReference>
<dbReference type="GO" id="GO:0050626">
    <property type="term" value="F:trimethylamine-N-oxide reductase (cytochrome c) activity"/>
    <property type="evidence" value="ECO:0007669"/>
    <property type="project" value="UniProtKB-EC"/>
</dbReference>
<dbReference type="GO" id="GO:0009061">
    <property type="term" value="P:anaerobic respiration"/>
    <property type="evidence" value="ECO:0000318"/>
    <property type="project" value="GO_Central"/>
</dbReference>
<dbReference type="CDD" id="cd02793">
    <property type="entry name" value="MopB_CT_DMSOR-BSOR-TMAOR"/>
    <property type="match status" value="1"/>
</dbReference>
<dbReference type="CDD" id="cd02769">
    <property type="entry name" value="MopB_DMSOR-BSOR-TMAOR"/>
    <property type="match status" value="1"/>
</dbReference>
<dbReference type="FunFam" id="2.40.40.20:FF:000009">
    <property type="entry name" value="Biotin sulfoxide reductase 2"/>
    <property type="match status" value="1"/>
</dbReference>
<dbReference type="FunFam" id="3.40.228.10:FF:000003">
    <property type="entry name" value="Biotin sulfoxide reductase 2"/>
    <property type="match status" value="1"/>
</dbReference>
<dbReference type="Gene3D" id="2.40.40.20">
    <property type="match status" value="1"/>
</dbReference>
<dbReference type="Gene3D" id="3.40.50.740">
    <property type="match status" value="1"/>
</dbReference>
<dbReference type="Gene3D" id="3.40.228.10">
    <property type="entry name" value="Dimethylsulfoxide Reductase, domain 2"/>
    <property type="match status" value="1"/>
</dbReference>
<dbReference type="Gene3D" id="3.90.55.10">
    <property type="entry name" value="Dimethylsulfoxide Reductase, domain 3"/>
    <property type="match status" value="1"/>
</dbReference>
<dbReference type="InterPro" id="IPR009010">
    <property type="entry name" value="Asp_de-COase-like_dom_sf"/>
</dbReference>
<dbReference type="InterPro" id="IPR006658">
    <property type="entry name" value="BisC"/>
</dbReference>
<dbReference type="InterPro" id="IPR041954">
    <property type="entry name" value="CT_DMSOR/BSOR/TMAOR"/>
</dbReference>
<dbReference type="InterPro" id="IPR041460">
    <property type="entry name" value="Molybdopterin_N"/>
</dbReference>
<dbReference type="InterPro" id="IPR006657">
    <property type="entry name" value="MoPterin_dinucl-bd_dom"/>
</dbReference>
<dbReference type="InterPro" id="IPR006656">
    <property type="entry name" value="Mopterin_OxRdtase"/>
</dbReference>
<dbReference type="InterPro" id="IPR006655">
    <property type="entry name" value="Mopterin_OxRdtase_prok_CS"/>
</dbReference>
<dbReference type="InterPro" id="IPR050612">
    <property type="entry name" value="Prok_Mopterin_Oxidored"/>
</dbReference>
<dbReference type="InterPro" id="IPR006311">
    <property type="entry name" value="TAT_signal"/>
</dbReference>
<dbReference type="InterPro" id="IPR011887">
    <property type="entry name" value="TorA"/>
</dbReference>
<dbReference type="NCBIfam" id="TIGR00509">
    <property type="entry name" value="bisC_fam"/>
    <property type="match status" value="1"/>
</dbReference>
<dbReference type="NCBIfam" id="NF011682">
    <property type="entry name" value="PRK15102.1"/>
    <property type="match status" value="1"/>
</dbReference>
<dbReference type="NCBIfam" id="TIGR02164">
    <property type="entry name" value="torA"/>
    <property type="match status" value="1"/>
</dbReference>
<dbReference type="PANTHER" id="PTHR43742">
    <property type="entry name" value="TRIMETHYLAMINE-N-OXIDE REDUCTASE"/>
    <property type="match status" value="1"/>
</dbReference>
<dbReference type="PANTHER" id="PTHR43742:SF4">
    <property type="entry name" value="TRIMETHYLAMINE-N-OXIDE REDUCTASE 1"/>
    <property type="match status" value="1"/>
</dbReference>
<dbReference type="Pfam" id="PF00384">
    <property type="entry name" value="Molybdopterin"/>
    <property type="match status" value="1"/>
</dbReference>
<dbReference type="Pfam" id="PF18364">
    <property type="entry name" value="Molybdopterin_N"/>
    <property type="match status" value="1"/>
</dbReference>
<dbReference type="Pfam" id="PF01568">
    <property type="entry name" value="Molydop_binding"/>
    <property type="match status" value="1"/>
</dbReference>
<dbReference type="SUPFAM" id="SSF50692">
    <property type="entry name" value="ADC-like"/>
    <property type="match status" value="1"/>
</dbReference>
<dbReference type="SUPFAM" id="SSF53706">
    <property type="entry name" value="Formate dehydrogenase/DMSO reductase, domains 1-3"/>
    <property type="match status" value="1"/>
</dbReference>
<dbReference type="PROSITE" id="PS00490">
    <property type="entry name" value="MOLYBDOPTERIN_PROK_2"/>
    <property type="match status" value="1"/>
</dbReference>
<dbReference type="PROSITE" id="PS00932">
    <property type="entry name" value="MOLYBDOPTERIN_PROK_3"/>
    <property type="match status" value="1"/>
</dbReference>
<dbReference type="PROSITE" id="PS51318">
    <property type="entry name" value="TAT"/>
    <property type="match status" value="1"/>
</dbReference>
<comment type="function">
    <text evidence="1">Reduces trimethylamine-N-oxide (TMAO) into trimethylamine; an anaerobic reaction coupled to energy-yielding reactions.</text>
</comment>
<comment type="catalytic activity">
    <reaction>
        <text>trimethylamine + 2 Fe(III)-[cytochrome c] + H2O = trimethylamine N-oxide + 2 Fe(II)-[cytochrome c] + 3 H(+)</text>
        <dbReference type="Rhea" id="RHEA:24236"/>
        <dbReference type="Rhea" id="RHEA-COMP:10350"/>
        <dbReference type="Rhea" id="RHEA-COMP:14399"/>
        <dbReference type="ChEBI" id="CHEBI:15377"/>
        <dbReference type="ChEBI" id="CHEBI:15378"/>
        <dbReference type="ChEBI" id="CHEBI:15724"/>
        <dbReference type="ChEBI" id="CHEBI:29033"/>
        <dbReference type="ChEBI" id="CHEBI:29034"/>
        <dbReference type="ChEBI" id="CHEBI:58389"/>
        <dbReference type="EC" id="1.7.2.3"/>
    </reaction>
</comment>
<comment type="cofactor">
    <cofactor evidence="1">
        <name>Mo-bis(molybdopterin guanine dinucleotide)</name>
        <dbReference type="ChEBI" id="CHEBI:60539"/>
    </cofactor>
    <text evidence="1">Binds 1 molybdenum-bis(molybdopterin guanine dinucleotide) (Mo-bis-MGD) cofactor per subunit.</text>
</comment>
<comment type="subcellular location">
    <subcellularLocation>
        <location evidence="1">Periplasm</location>
    </subcellularLocation>
</comment>
<comment type="PTM">
    <text>Predicted to be exported by the Tat system. The position of the signal peptide cleavage has not been experimentally proven.</text>
</comment>
<comment type="similarity">
    <text evidence="3">Belongs to the prokaryotic molybdopterin-containing oxidoreductase family.</text>
</comment>
<gene>
    <name type="primary">torA</name>
    <name type="ordered locus">STM3822</name>
</gene>
<name>TORA_SALTY</name>
<organism>
    <name type="scientific">Salmonella typhimurium (strain LT2 / SGSC1412 / ATCC 700720)</name>
    <dbReference type="NCBI Taxonomy" id="99287"/>
    <lineage>
        <taxon>Bacteria</taxon>
        <taxon>Pseudomonadati</taxon>
        <taxon>Pseudomonadota</taxon>
        <taxon>Gammaproteobacteria</taxon>
        <taxon>Enterobacterales</taxon>
        <taxon>Enterobacteriaceae</taxon>
        <taxon>Salmonella</taxon>
    </lineage>
</organism>
<sequence length="850" mass="94727">MKNKDSLHVSRRRFLAQLGGLTVAGMLGPSLLTPRSARAADAVAPGAATKEGILTGSHWGAIRATVVDGRFVAAKPFEQDKYPSKMIAGLPDHVHNAARIRYPMVRVDWMRKGHQSDTSQRGDNRFVRVSWDEALDLFYQELERVQKTYGPSALLTASGWQSTGMFHNASGMLARAIALHGNSVSTGGDYSTGAAQVILPRVVGSMEVYEQQTSWPLVLQNSKTIVLWGSDMVKNQQANWWCPDHDVYQYYEQLKEKVASGAISVISIDPVVTSTHDYLGRDKVKHIAINPQTDVPLQLALAHTLYSEKLYDKNFLDNYCVGFDQFLPYLLGEKDGQPKDAAWAEKLCGIDADTIRALARQMAGDRTQIIAGWCVQRMQHGEQWSWMVVVLAAMLGQIGLPGGGFGFGWHYNGAGTPGRKGIILSGFSGSTTVPPVHDSTDYKGYSSTIPIARFMDAILEPGKIINWNGKSVKLPPLKMCVFAGTNPFHRHQQINRIIEGWRKLETVIAIDNQWTSTCRFADIVLPATTQFERNDLDQFGNHSNRGIIAMKQVVSPQFEARNDFDIFRDLCRRFNREAAFTEGLDEMGWLKRIWQEGSQQGKGRGIHLPIFEVFWNQQEYIEFDHPQMFVRHQAFREDPDLEPLGTPSGLIEIYSKTIADMQYDDCQGHPMWFEKIERSHGGPGSQRWPLHLQSVHPDFRLHSQLCESETLRQQYAVGGKEPVFINPQDASARGIRNGDIVRVFNARGQVLAGAVVSDRYAPGVARIHEGAWYDPDKGGDLNALCKYGNPNVLTLDIGTSQLAQATSAHTTLVEIEKYTGPMDNVTAFNGPVEMVAQCEYVPASQGNPHD</sequence>
<accession>Q8ZKZ7</accession>
<protein>
    <recommendedName>
        <fullName>Trimethylamine-N-oxide reductase</fullName>
        <shortName>TMAO reductase</shortName>
        <shortName>Trimethylamine oxidase</shortName>
        <ecNumber>1.7.2.3</ecNumber>
    </recommendedName>
</protein>
<evidence type="ECO:0000250" key="1"/>
<evidence type="ECO:0000255" key="2">
    <source>
        <dbReference type="PROSITE-ProRule" id="PRU00648"/>
    </source>
</evidence>
<evidence type="ECO:0000305" key="3"/>
<feature type="signal peptide" description="Tat-type signal" evidence="2">
    <location>
        <begin position="1"/>
        <end position="39"/>
    </location>
</feature>
<feature type="chain" id="PRO_0000019156" description="Trimethylamine-N-oxide reductase">
    <location>
        <begin position="40"/>
        <end position="850"/>
    </location>
</feature>
<feature type="binding site" evidence="1">
    <location>
        <position position="191"/>
    </location>
    <ligand>
        <name>Mo-bis(molybdopterin guanine dinucleotide)</name>
        <dbReference type="ChEBI" id="CHEBI:60539"/>
    </ligand>
    <ligandPart>
        <name>Mo</name>
        <dbReference type="ChEBI" id="CHEBI:28685"/>
    </ligandPart>
</feature>
<keyword id="KW-0479">Metal-binding</keyword>
<keyword id="KW-0500">Molybdenum</keyword>
<keyword id="KW-0560">Oxidoreductase</keyword>
<keyword id="KW-0574">Periplasm</keyword>
<keyword id="KW-1185">Reference proteome</keyword>
<keyword id="KW-0732">Signal</keyword>